<feature type="signal peptide" evidence="1">
    <location>
        <begin position="1"/>
        <end position="24"/>
    </location>
</feature>
<feature type="chain" id="PRO_0000025671" description="Major prion protein">
    <location>
        <begin position="25"/>
        <end position="233"/>
    </location>
</feature>
<feature type="propeptide" id="PRO_0000025672" description="Removed in mature form" evidence="5">
    <location>
        <begin position="234"/>
        <end position="256"/>
    </location>
</feature>
<feature type="repeat" description="1">
    <location>
        <begin position="54"/>
        <end position="62"/>
    </location>
</feature>
<feature type="repeat" description="2">
    <location>
        <begin position="63"/>
        <end position="70"/>
    </location>
</feature>
<feature type="repeat" description="3">
    <location>
        <begin position="71"/>
        <end position="78"/>
    </location>
</feature>
<feature type="repeat" description="4">
    <location>
        <begin position="79"/>
        <end position="86"/>
    </location>
</feature>
<feature type="repeat" description="5">
    <location>
        <begin position="87"/>
        <end position="95"/>
    </location>
</feature>
<feature type="region of interest" description="Interaction with GRB2, ERI3 and SYN1" evidence="4">
    <location>
        <begin position="25"/>
        <end position="233"/>
    </location>
</feature>
<feature type="region of interest" description="Interaction with ADGRG6" evidence="4">
    <location>
        <begin position="25"/>
        <end position="41"/>
    </location>
</feature>
<feature type="region of interest" description="Disordered" evidence="6">
    <location>
        <begin position="28"/>
        <end position="110"/>
    </location>
</feature>
<feature type="region of interest" description="5 X 8 AA tandem repeats of P-H-G-G-G-W-G-Q">
    <location>
        <begin position="54"/>
        <end position="95"/>
    </location>
</feature>
<feature type="compositionally biased region" description="Gly residues" evidence="6">
    <location>
        <begin position="55"/>
        <end position="97"/>
    </location>
</feature>
<feature type="binding site" evidence="2">
    <location>
        <position position="64"/>
    </location>
    <ligand>
        <name>Cu(2+)</name>
        <dbReference type="ChEBI" id="CHEBI:29036"/>
        <label>1</label>
    </ligand>
</feature>
<feature type="binding site" evidence="2">
    <location>
        <position position="65"/>
    </location>
    <ligand>
        <name>Cu(2+)</name>
        <dbReference type="ChEBI" id="CHEBI:29036"/>
        <label>1</label>
    </ligand>
</feature>
<feature type="binding site" evidence="2">
    <location>
        <position position="66"/>
    </location>
    <ligand>
        <name>Cu(2+)</name>
        <dbReference type="ChEBI" id="CHEBI:29036"/>
        <label>1</label>
    </ligand>
</feature>
<feature type="binding site" evidence="2">
    <location>
        <position position="72"/>
    </location>
    <ligand>
        <name>Cu(2+)</name>
        <dbReference type="ChEBI" id="CHEBI:29036"/>
        <label>2</label>
    </ligand>
</feature>
<feature type="binding site" evidence="2">
    <location>
        <position position="73"/>
    </location>
    <ligand>
        <name>Cu(2+)</name>
        <dbReference type="ChEBI" id="CHEBI:29036"/>
        <label>2</label>
    </ligand>
</feature>
<feature type="binding site" evidence="2">
    <location>
        <position position="74"/>
    </location>
    <ligand>
        <name>Cu(2+)</name>
        <dbReference type="ChEBI" id="CHEBI:29036"/>
        <label>2</label>
    </ligand>
</feature>
<feature type="binding site" evidence="2">
    <location>
        <position position="80"/>
    </location>
    <ligand>
        <name>Cu(2+)</name>
        <dbReference type="ChEBI" id="CHEBI:29036"/>
        <label>3</label>
    </ligand>
</feature>
<feature type="binding site" evidence="2">
    <location>
        <position position="81"/>
    </location>
    <ligand>
        <name>Cu(2+)</name>
        <dbReference type="ChEBI" id="CHEBI:29036"/>
        <label>3</label>
    </ligand>
</feature>
<feature type="binding site" evidence="2">
    <location>
        <position position="82"/>
    </location>
    <ligand>
        <name>Cu(2+)</name>
        <dbReference type="ChEBI" id="CHEBI:29036"/>
        <label>3</label>
    </ligand>
</feature>
<feature type="binding site" evidence="2">
    <location>
        <position position="88"/>
    </location>
    <ligand>
        <name>Cu(2+)</name>
        <dbReference type="ChEBI" id="CHEBI:29036"/>
        <label>4</label>
    </ligand>
</feature>
<feature type="binding site" evidence="2">
    <location>
        <position position="90"/>
    </location>
    <ligand>
        <name>Cu(2+)</name>
        <dbReference type="ChEBI" id="CHEBI:29036"/>
        <label>4</label>
    </ligand>
</feature>
<feature type="binding site" evidence="2">
    <location>
        <position position="91"/>
    </location>
    <ligand>
        <name>Cu(2+)</name>
        <dbReference type="ChEBI" id="CHEBI:29036"/>
        <label>4</label>
    </ligand>
</feature>
<feature type="lipid moiety-binding region" description="GPI-anchor amidated alanine" evidence="5">
    <location>
        <position position="233"/>
    </location>
</feature>
<feature type="glycosylation site" description="N-linked (GlcNAc...) asparagine" evidence="5">
    <location>
        <position position="184"/>
    </location>
</feature>
<feature type="glycosylation site" description="N-linked (GlcNAc...) asparagine" evidence="5">
    <location>
        <position position="200"/>
    </location>
</feature>
<feature type="disulfide bond" evidence="3">
    <location>
        <begin position="182"/>
        <end position="217"/>
    </location>
</feature>
<feature type="sequence conflict" description="In Ref. 2; AAS94127." evidence="7" ref="2">
    <original>H</original>
    <variation>HA</variation>
    <location>
        <position position="64"/>
    </location>
</feature>
<feature type="sequence conflict" description="In Ref. 2; AAS94127." evidence="7" ref="2">
    <original>H</original>
    <variation>HA</variation>
    <location>
        <position position="72"/>
    </location>
</feature>
<feature type="sequence conflict" description="In Ref. 2; AAS94127." evidence="7" ref="2">
    <original>H</original>
    <variation>HA</variation>
    <location>
        <position position="80"/>
    </location>
</feature>
<feature type="sequence conflict" description="In Ref. 2; AAS94127." evidence="7" ref="2">
    <original>G</original>
    <variation>A</variation>
    <location>
        <position position="89"/>
    </location>
</feature>
<feature type="sequence conflict" description="In Ref. 2." evidence="7" ref="2">
    <original>SHSQWN</original>
    <variation>GTHGQWG</variation>
    <location>
        <begin position="98"/>
        <end position="103"/>
    </location>
</feature>
<feature type="sequence conflict" description="In Ref. 1 and 3." evidence="7" ref="1 3">
    <original>M</original>
    <variation>V</variation>
    <location>
        <position position="115"/>
    </location>
</feature>
<feature type="sequence conflict" description="In Ref. 3." evidence="7" ref="3">
    <original>N</original>
    <variation>D</variation>
    <location>
        <position position="162"/>
    </location>
</feature>
<feature type="sequence conflict" description="In Ref. 3." evidence="7" ref="3">
    <original>H</original>
    <variation>R</variation>
    <location>
        <position position="180"/>
    </location>
</feature>
<feature type="sequence conflict" description="In Ref. 2; AAS94127." evidence="7" ref="2">
    <original>K</original>
    <variation>R</variation>
    <location>
        <position position="188"/>
    </location>
</feature>
<feature type="sequence conflict" description="In Ref. 1 and 3." evidence="7" ref="1 3">
    <original>H</original>
    <variation>R</variation>
    <location>
        <position position="190"/>
    </location>
</feature>
<feature type="sequence conflict" description="In Ref. 1; AAB70468." evidence="7" ref="1">
    <original>M</original>
    <variation>I</variation>
    <location>
        <position position="206"/>
    </location>
</feature>
<feature type="sequence conflict" description="In Ref. 1; AAB70468." evidence="7" ref="1">
    <original>V</original>
    <variation>I</variation>
    <location>
        <position position="218"/>
    </location>
</feature>
<feature type="sequence conflict" description="In Ref. 1; AAB70468." evidence="7" ref="1">
    <original>K</original>
    <variation>R</variation>
    <location>
        <position position="223"/>
    </location>
</feature>
<feature type="sequence conflict" description="In Ref. 1; AAB70468." evidence="7" ref="1">
    <original>R</original>
    <variation>G</variation>
    <location>
        <position position="232"/>
    </location>
</feature>
<feature type="sequence conflict" description="In Ref. 1; AAB70468." evidence="7" ref="1">
    <original>A</original>
    <variation>V</variation>
    <location>
        <position position="235"/>
    </location>
</feature>
<feature type="strand" evidence="8">
    <location>
        <begin position="126"/>
        <end position="128"/>
    </location>
</feature>
<feature type="helix" evidence="8">
    <location>
        <begin position="148"/>
        <end position="154"/>
    </location>
</feature>
<feature type="helix" evidence="8">
    <location>
        <begin position="155"/>
        <end position="159"/>
    </location>
</feature>
<feature type="strand" evidence="8">
    <location>
        <begin position="175"/>
        <end position="177"/>
    </location>
</feature>
<feature type="helix" evidence="8">
    <location>
        <begin position="180"/>
        <end position="195"/>
    </location>
</feature>
<feature type="turn" evidence="8">
    <location>
        <begin position="196"/>
        <end position="198"/>
    </location>
</feature>
<feature type="helix" evidence="8">
    <location>
        <begin position="203"/>
        <end position="230"/>
    </location>
</feature>
<name>PRIO_FELCA</name>
<reference key="1">
    <citation type="submission" date="1997-05" db="EMBL/GenBank/DDBJ databases">
        <authorList>
            <person name="Rohwer R.G."/>
            <person name="Edelman D."/>
            <person name="Protzman J.L."/>
        </authorList>
    </citation>
    <scope>NUCLEOTIDE SEQUENCE [GENOMIC DNA]</scope>
    <source>
        <tissue>Blood</tissue>
        <tissue>Brain</tissue>
    </source>
</reference>
<reference key="2">
    <citation type="journal article" date="2004" name="Gene">
        <title>Amino acid sequence of the Felis catus prion protein.</title>
        <authorList>
            <person name="Lysek D.A."/>
            <person name="Nivon L.G."/>
            <person name="Wuethrich K."/>
        </authorList>
    </citation>
    <scope>NUCLEOTIDE SEQUENCE [GENOMIC DNA] OF 25-234</scope>
</reference>
<reference key="3">
    <citation type="submission" date="1997-06" db="EMBL/GenBank/DDBJ databases">
        <authorList>
            <person name="Taylor M.S."/>
            <person name="Newton D.J."/>
            <person name="Flanagan B.F."/>
            <person name="Christmas S.E."/>
        </authorList>
    </citation>
    <scope>NUCLEOTIDE SEQUENCE [GENOMIC DNA] OF 112-235</scope>
</reference>
<reference key="4">
    <citation type="journal article" date="2005" name="Proc. Natl. Acad. Sci. U.S.A.">
        <title>Prion protein NMR structures of cats, dogs, pigs, and sheep.</title>
        <authorList>
            <person name="Lysek D.A."/>
            <person name="Schorn C."/>
            <person name="Nivon L.G."/>
            <person name="Esteve-Moya V."/>
            <person name="Christen B."/>
            <person name="Calzolai L."/>
            <person name="von Schroetter C."/>
            <person name="Fiorito F."/>
            <person name="Herrmann T."/>
            <person name="Guentert P."/>
            <person name="Wuethrich K."/>
        </authorList>
    </citation>
    <scope>STRUCTURE BY NMR OF 104-214</scope>
</reference>
<keyword id="KW-0002">3D-structure</keyword>
<keyword id="KW-0034">Amyloid</keyword>
<keyword id="KW-1003">Cell membrane</keyword>
<keyword id="KW-0186">Copper</keyword>
<keyword id="KW-1015">Disulfide bond</keyword>
<keyword id="KW-0325">Glycoprotein</keyword>
<keyword id="KW-0333">Golgi apparatus</keyword>
<keyword id="KW-0336">GPI-anchor</keyword>
<keyword id="KW-0449">Lipoprotein</keyword>
<keyword id="KW-0472">Membrane</keyword>
<keyword id="KW-0479">Metal-binding</keyword>
<keyword id="KW-0640">Prion</keyword>
<keyword id="KW-1185">Reference proteome</keyword>
<keyword id="KW-0677">Repeat</keyword>
<keyword id="KW-0732">Signal</keyword>
<keyword id="KW-0862">Zinc</keyword>
<accession>O18754</accession>
<accession>O19016</accession>
<accession>Q5YCW7</accession>
<protein>
    <recommendedName>
        <fullName>Major prion protein</fullName>
        <shortName>PrP</shortName>
    </recommendedName>
    <cdAntigenName>CD230</cdAntigenName>
</protein>
<evidence type="ECO:0000250" key="1"/>
<evidence type="ECO:0000250" key="2">
    <source>
        <dbReference type="UniProtKB" id="P04156"/>
    </source>
</evidence>
<evidence type="ECO:0000250" key="3">
    <source>
        <dbReference type="UniProtKB" id="P04273"/>
    </source>
</evidence>
<evidence type="ECO:0000250" key="4">
    <source>
        <dbReference type="UniProtKB" id="P04925"/>
    </source>
</evidence>
<evidence type="ECO:0000255" key="5"/>
<evidence type="ECO:0000256" key="6">
    <source>
        <dbReference type="SAM" id="MobiDB-lite"/>
    </source>
</evidence>
<evidence type="ECO:0000305" key="7"/>
<evidence type="ECO:0007829" key="8">
    <source>
        <dbReference type="PDB" id="1XYJ"/>
    </source>
</evidence>
<gene>
    <name type="primary">PRNP</name>
    <name type="synonym">PRP</name>
</gene>
<organism>
    <name type="scientific">Felis catus</name>
    <name type="common">Cat</name>
    <name type="synonym">Felis silvestris catus</name>
    <dbReference type="NCBI Taxonomy" id="9685"/>
    <lineage>
        <taxon>Eukaryota</taxon>
        <taxon>Metazoa</taxon>
        <taxon>Chordata</taxon>
        <taxon>Craniata</taxon>
        <taxon>Vertebrata</taxon>
        <taxon>Euteleostomi</taxon>
        <taxon>Mammalia</taxon>
        <taxon>Eutheria</taxon>
        <taxon>Laurasiatheria</taxon>
        <taxon>Carnivora</taxon>
        <taxon>Feliformia</taxon>
        <taxon>Felidae</taxon>
        <taxon>Felinae</taxon>
        <taxon>Felis</taxon>
    </lineage>
</organism>
<sequence>MVKSHIGSWILVLFVAMWSDVGLCKKRPKPGGGWNTGGSRYPGQGSPGGNRYPPQGGGGWGQPHGGGWGQPHGGGWGQPHGGGWGQPHGGGGWGQGGSHSQWNKPSKPKTNMKHMAGAAAAGAVVGGLGGYMLGSAMSRPLIHFGNDYEDRYYRENMYRYPNQVYYRPVDQYSNQNNFVHDCVNITVKQHTVTTTTKGENFTETDMKIMERVVEQMCVTQYQKESEAYYQRRASAILFSSPPVILLISFLIFLIVG</sequence>
<proteinExistence type="evidence at protein level"/>
<comment type="function">
    <text evidence="2 4">Its primary physiological function is unclear. May play a role in neuronal development and synaptic plasticity. May be required for neuronal myelin sheath maintenance. May promote myelin homeostasis through acting as an agonist for ADGRG6 receptor. May play a role in iron uptake and iron homeostasis. Soluble oligomers are toxic to cultured neuroblastoma cells and induce apoptosis (in vitro) (By similarity). Association with GPC1 (via its heparan sulfate chains) targets PRNP to lipid rafts. Also provides Cu(2+) or Zn(2+) for the ascorbate-mediated GPC1 deaminase degradation of its heparan sulfate side chains (By similarity).</text>
</comment>
<comment type="subunit">
    <text evidence="2 4">Monomer and homodimer. Has a tendency to aggregate into amyloid fibrils containing a cross-beta spine, formed by a steric zipper of superposed beta-strands. Soluble oligomers may represent an intermediate stage on the path to fibril formation. Copper binding may promote oligomerization. Interacts with GRB2, APP, ERI3/PRNPIP and SYN1 (By similarity). Mislocalized cytosolically exposed PrP interacts with MGRN1; this interaction alters MGRN1 subcellular location and causes lysosomal enlargement (By similarity). Interacts with APP. Interacts with KIAA1191 (By similarity). Interacts with ADGRG6 (By similarity).</text>
</comment>
<comment type="subcellular location">
    <subcellularLocation>
        <location evidence="2">Cell membrane</location>
        <topology evidence="2">Lipid-anchor</topology>
        <topology evidence="2">GPI-anchor</topology>
    </subcellularLocation>
    <subcellularLocation>
        <location evidence="4">Golgi apparatus</location>
    </subcellularLocation>
    <text evidence="2">Targeted to lipid rafts via association with the heparan sulfate chains of GPC1. Colocates, in the presence of Cu(2+), to vesicles in para- and perinuclear regions, where both proteins undergo internalization. Heparin displaces PRNP from lipid rafts and promotes endocytosis.</text>
</comment>
<comment type="domain">
    <text evidence="2">The normal, monomeric form has a mainly alpha-helical structure. The disease-associated, protease-resistant form forms amyloid fibrils containing a cross-beta spine, formed by a steric zipper of superposed beta-strands. Disease mutations may favor intermolecular contacts via short beta strands, and may thereby trigger oligomerization.</text>
</comment>
<comment type="domain">
    <text evidence="2">Contains an N-terminal region composed of octamer repeats. At low copper concentrations, the sidechains of His residues from three or four repeats contribute to the binding of a single copper ion. Alternatively, a copper ion can be bound by interaction with the sidechain and backbone amide nitrogen of a single His residue. The observed copper binding stoichiometry suggests that two repeat regions cooperate to stabilize the binding of a single copper ion. At higher copper concentrations, each octamer can bind one copper ion by interactions with the His sidechain and Gly backbone atoms. A mixture of binding types may occur, especially in the case of octamer repeat expansion. Copper binding may stabilize the conformation of this region and may promote oligomerization.</text>
</comment>
<comment type="disease">
    <text evidence="7">PrP is found in high quantity in the brain of humans and animals infected with the degenerative neurological diseases kuru, Creutzfeldt-Jakob disease (CJD), Gerstmann-Straussler syndrome (GSS), scrapie, bovine spongiform encephalopathy (BSE), transmissible mink encephalopathy (TME), etc.</text>
</comment>
<comment type="similarity">
    <text evidence="7">Belongs to the prion family.</text>
</comment>
<dbReference type="EMBL" id="AF003087">
    <property type="protein sequence ID" value="AAB70468.1"/>
    <property type="molecule type" value="Genomic_DNA"/>
</dbReference>
<dbReference type="EMBL" id="AY573555">
    <property type="protein sequence ID" value="AAS94127.1"/>
    <property type="molecule type" value="Genomic_DNA"/>
</dbReference>
<dbReference type="EMBL" id="Y13698">
    <property type="protein sequence ID" value="CAA74032.1"/>
    <property type="molecule type" value="Genomic_DNA"/>
</dbReference>
<dbReference type="PDB" id="1XYJ">
    <property type="method" value="NMR"/>
    <property type="chains" value="A=124-234"/>
</dbReference>
<dbReference type="PDBsum" id="1XYJ"/>
<dbReference type="BMRB" id="O18754"/>
<dbReference type="SMR" id="O18754"/>
<dbReference type="FunCoup" id="O18754">
    <property type="interactions" value="9"/>
</dbReference>
<dbReference type="STRING" id="9685.ENSFCAP00000030786"/>
<dbReference type="GlyCosmos" id="O18754">
    <property type="glycosylation" value="2 sites, No reported glycans"/>
</dbReference>
<dbReference type="InParanoid" id="O18754"/>
<dbReference type="EvolutionaryTrace" id="O18754"/>
<dbReference type="Proteomes" id="UP000011712">
    <property type="component" value="Unplaced"/>
</dbReference>
<dbReference type="GO" id="GO:0005794">
    <property type="term" value="C:Golgi apparatus"/>
    <property type="evidence" value="ECO:0007669"/>
    <property type="project" value="UniProtKB-SubCell"/>
</dbReference>
<dbReference type="GO" id="GO:0005886">
    <property type="term" value="C:plasma membrane"/>
    <property type="evidence" value="ECO:0007669"/>
    <property type="project" value="UniProtKB-SubCell"/>
</dbReference>
<dbReference type="GO" id="GO:0098552">
    <property type="term" value="C:side of membrane"/>
    <property type="evidence" value="ECO:0007669"/>
    <property type="project" value="UniProtKB-KW"/>
</dbReference>
<dbReference type="GO" id="GO:0005507">
    <property type="term" value="F:copper ion binding"/>
    <property type="evidence" value="ECO:0000250"/>
    <property type="project" value="UniProtKB"/>
</dbReference>
<dbReference type="GO" id="GO:0051260">
    <property type="term" value="P:protein homooligomerization"/>
    <property type="evidence" value="ECO:0007669"/>
    <property type="project" value="InterPro"/>
</dbReference>
<dbReference type="FunFam" id="1.10.790.10:FF:000001">
    <property type="entry name" value="Major prion protein"/>
    <property type="match status" value="1"/>
</dbReference>
<dbReference type="Gene3D" id="1.10.790.10">
    <property type="entry name" value="Prion/Doppel protein, beta-ribbon domain"/>
    <property type="match status" value="1"/>
</dbReference>
<dbReference type="InterPro" id="IPR000817">
    <property type="entry name" value="Prion"/>
</dbReference>
<dbReference type="InterPro" id="IPR036924">
    <property type="entry name" value="Prion/Doppel_b-ribbon_dom_sf"/>
</dbReference>
<dbReference type="InterPro" id="IPR022416">
    <property type="entry name" value="Prion/Doppel_prot_b-ribbon_dom"/>
</dbReference>
<dbReference type="InterPro" id="IPR020949">
    <property type="entry name" value="Prion_copper_b_octapeptide"/>
</dbReference>
<dbReference type="InterPro" id="IPR025860">
    <property type="entry name" value="Prion_N"/>
</dbReference>
<dbReference type="PANTHER" id="PTHR15506">
    <property type="entry name" value="DOPPEL PRION"/>
    <property type="match status" value="1"/>
</dbReference>
<dbReference type="PANTHER" id="PTHR15506:SF2">
    <property type="entry name" value="MAJOR PRION PROTEIN"/>
    <property type="match status" value="1"/>
</dbReference>
<dbReference type="Pfam" id="PF00377">
    <property type="entry name" value="Prion"/>
    <property type="match status" value="1"/>
</dbReference>
<dbReference type="Pfam" id="PF11587">
    <property type="entry name" value="Prion_bPrPp"/>
    <property type="match status" value="1"/>
</dbReference>
<dbReference type="Pfam" id="PF03991">
    <property type="entry name" value="Prion_octapep"/>
    <property type="match status" value="1"/>
</dbReference>
<dbReference type="PRINTS" id="PR00341">
    <property type="entry name" value="PRION"/>
</dbReference>
<dbReference type="SMART" id="SM00157">
    <property type="entry name" value="PRP"/>
    <property type="match status" value="1"/>
</dbReference>
<dbReference type="SUPFAM" id="SSF54098">
    <property type="entry name" value="Prion-like"/>
    <property type="match status" value="1"/>
</dbReference>
<dbReference type="PROSITE" id="PS00291">
    <property type="entry name" value="PRION_1"/>
    <property type="match status" value="1"/>
</dbReference>
<dbReference type="PROSITE" id="PS00706">
    <property type="entry name" value="PRION_2"/>
    <property type="match status" value="1"/>
</dbReference>